<protein>
    <recommendedName>
        <fullName evidence="1">Tyrosine--tRNA ligase 1</fullName>
        <ecNumber evidence="1">6.1.1.1</ecNumber>
    </recommendedName>
    <alternativeName>
        <fullName evidence="1">Tyrosyl-tRNA synthetase 1</fullName>
        <shortName evidence="1">TyrRS 1</shortName>
    </alternativeName>
</protein>
<reference key="1">
    <citation type="journal article" date="2003" name="Nature">
        <title>Genome sequence of Bacillus cereus and comparative analysis with Bacillus anthracis.</title>
        <authorList>
            <person name="Ivanova N."/>
            <person name="Sorokin A."/>
            <person name="Anderson I."/>
            <person name="Galleron N."/>
            <person name="Candelon B."/>
            <person name="Kapatral V."/>
            <person name="Bhattacharyya A."/>
            <person name="Reznik G."/>
            <person name="Mikhailova N."/>
            <person name="Lapidus A."/>
            <person name="Chu L."/>
            <person name="Mazur M."/>
            <person name="Goltsman E."/>
            <person name="Larsen N."/>
            <person name="D'Souza M."/>
            <person name="Walunas T."/>
            <person name="Grechkin Y."/>
            <person name="Pusch G."/>
            <person name="Haselkorn R."/>
            <person name="Fonstein M."/>
            <person name="Ehrlich S.D."/>
            <person name="Overbeek R."/>
            <person name="Kyrpides N.C."/>
        </authorList>
    </citation>
    <scope>NUCLEOTIDE SEQUENCE [LARGE SCALE GENOMIC DNA]</scope>
    <source>
        <strain>ATCC 14579 / DSM 31 / CCUG 7414 / JCM 2152 / NBRC 15305 / NCIMB 9373 / NCTC 2599 / NRRL B-3711</strain>
    </source>
</reference>
<feature type="chain" id="PRO_0000234671" description="Tyrosine--tRNA ligase 1">
    <location>
        <begin position="1"/>
        <end position="418"/>
    </location>
</feature>
<feature type="domain" description="S4 RNA-binding" evidence="1">
    <location>
        <begin position="352"/>
        <end position="418"/>
    </location>
</feature>
<feature type="short sequence motif" description="'HIGH' region">
    <location>
        <begin position="39"/>
        <end position="48"/>
    </location>
</feature>
<feature type="short sequence motif" description="'KMSKS' region">
    <location>
        <begin position="230"/>
        <end position="234"/>
    </location>
</feature>
<feature type="binding site" evidence="1">
    <location>
        <position position="34"/>
    </location>
    <ligand>
        <name>L-tyrosine</name>
        <dbReference type="ChEBI" id="CHEBI:58315"/>
    </ligand>
</feature>
<feature type="binding site" evidence="1">
    <location>
        <position position="169"/>
    </location>
    <ligand>
        <name>L-tyrosine</name>
        <dbReference type="ChEBI" id="CHEBI:58315"/>
    </ligand>
</feature>
<feature type="binding site" evidence="1">
    <location>
        <position position="173"/>
    </location>
    <ligand>
        <name>L-tyrosine</name>
        <dbReference type="ChEBI" id="CHEBI:58315"/>
    </ligand>
</feature>
<feature type="binding site" evidence="1">
    <location>
        <position position="233"/>
    </location>
    <ligand>
        <name>ATP</name>
        <dbReference type="ChEBI" id="CHEBI:30616"/>
    </ligand>
</feature>
<proteinExistence type="inferred from homology"/>
<dbReference type="EC" id="6.1.1.1" evidence="1"/>
<dbReference type="EMBL" id="AE016877">
    <property type="protein sequence ID" value="AAP11564.1"/>
    <property type="molecule type" value="Genomic_DNA"/>
</dbReference>
<dbReference type="RefSeq" id="NP_834363.1">
    <property type="nucleotide sequence ID" value="NC_004722.1"/>
</dbReference>
<dbReference type="RefSeq" id="WP_000512101.1">
    <property type="nucleotide sequence ID" value="NC_004722.1"/>
</dbReference>
<dbReference type="SMR" id="Q817A2"/>
<dbReference type="STRING" id="226900.BC_4657"/>
<dbReference type="KEGG" id="bce:BC4657"/>
<dbReference type="PATRIC" id="fig|226900.8.peg.4822"/>
<dbReference type="HOGENOM" id="CLU_024003_0_3_9"/>
<dbReference type="Proteomes" id="UP000001417">
    <property type="component" value="Chromosome"/>
</dbReference>
<dbReference type="GO" id="GO:0005829">
    <property type="term" value="C:cytosol"/>
    <property type="evidence" value="ECO:0000318"/>
    <property type="project" value="GO_Central"/>
</dbReference>
<dbReference type="GO" id="GO:0005524">
    <property type="term" value="F:ATP binding"/>
    <property type="evidence" value="ECO:0007669"/>
    <property type="project" value="UniProtKB-UniRule"/>
</dbReference>
<dbReference type="GO" id="GO:0003723">
    <property type="term" value="F:RNA binding"/>
    <property type="evidence" value="ECO:0007669"/>
    <property type="project" value="UniProtKB-KW"/>
</dbReference>
<dbReference type="GO" id="GO:0004831">
    <property type="term" value="F:tyrosine-tRNA ligase activity"/>
    <property type="evidence" value="ECO:0000318"/>
    <property type="project" value="GO_Central"/>
</dbReference>
<dbReference type="GO" id="GO:0043039">
    <property type="term" value="P:tRNA aminoacylation"/>
    <property type="evidence" value="ECO:0000318"/>
    <property type="project" value="GO_Central"/>
</dbReference>
<dbReference type="GO" id="GO:0006437">
    <property type="term" value="P:tyrosyl-tRNA aminoacylation"/>
    <property type="evidence" value="ECO:0007669"/>
    <property type="project" value="UniProtKB-UniRule"/>
</dbReference>
<dbReference type="CDD" id="cd00165">
    <property type="entry name" value="S4"/>
    <property type="match status" value="1"/>
</dbReference>
<dbReference type="CDD" id="cd00395">
    <property type="entry name" value="Tyr_Trp_RS_core"/>
    <property type="match status" value="1"/>
</dbReference>
<dbReference type="FunFam" id="1.10.240.10:FF:000001">
    <property type="entry name" value="Tyrosine--tRNA ligase"/>
    <property type="match status" value="1"/>
</dbReference>
<dbReference type="FunFam" id="3.10.290.10:FF:000012">
    <property type="entry name" value="Tyrosine--tRNA ligase"/>
    <property type="match status" value="1"/>
</dbReference>
<dbReference type="FunFam" id="3.40.50.620:FF:000008">
    <property type="entry name" value="Tyrosine--tRNA ligase"/>
    <property type="match status" value="1"/>
</dbReference>
<dbReference type="Gene3D" id="3.40.50.620">
    <property type="entry name" value="HUPs"/>
    <property type="match status" value="1"/>
</dbReference>
<dbReference type="Gene3D" id="3.10.290.10">
    <property type="entry name" value="RNA-binding S4 domain"/>
    <property type="match status" value="1"/>
</dbReference>
<dbReference type="Gene3D" id="1.10.240.10">
    <property type="entry name" value="Tyrosyl-Transfer RNA Synthetase"/>
    <property type="match status" value="1"/>
</dbReference>
<dbReference type="HAMAP" id="MF_02006">
    <property type="entry name" value="Tyr_tRNA_synth_type1"/>
    <property type="match status" value="1"/>
</dbReference>
<dbReference type="InterPro" id="IPR001412">
    <property type="entry name" value="aa-tRNA-synth_I_CS"/>
</dbReference>
<dbReference type="InterPro" id="IPR002305">
    <property type="entry name" value="aa-tRNA-synth_Ic"/>
</dbReference>
<dbReference type="InterPro" id="IPR014729">
    <property type="entry name" value="Rossmann-like_a/b/a_fold"/>
</dbReference>
<dbReference type="InterPro" id="IPR002942">
    <property type="entry name" value="S4_RNA-bd"/>
</dbReference>
<dbReference type="InterPro" id="IPR036986">
    <property type="entry name" value="S4_RNA-bd_sf"/>
</dbReference>
<dbReference type="InterPro" id="IPR054608">
    <property type="entry name" value="SYY-like_C"/>
</dbReference>
<dbReference type="InterPro" id="IPR002307">
    <property type="entry name" value="Tyr-tRNA-ligase"/>
</dbReference>
<dbReference type="InterPro" id="IPR024088">
    <property type="entry name" value="Tyr-tRNA-ligase_bac-type"/>
</dbReference>
<dbReference type="InterPro" id="IPR024107">
    <property type="entry name" value="Tyr-tRNA-ligase_bac_1"/>
</dbReference>
<dbReference type="NCBIfam" id="TIGR00234">
    <property type="entry name" value="tyrS"/>
    <property type="match status" value="1"/>
</dbReference>
<dbReference type="PANTHER" id="PTHR11766:SF0">
    <property type="entry name" value="TYROSINE--TRNA LIGASE, MITOCHONDRIAL"/>
    <property type="match status" value="1"/>
</dbReference>
<dbReference type="PANTHER" id="PTHR11766">
    <property type="entry name" value="TYROSYL-TRNA SYNTHETASE"/>
    <property type="match status" value="1"/>
</dbReference>
<dbReference type="Pfam" id="PF22421">
    <property type="entry name" value="SYY_C-terminal"/>
    <property type="match status" value="1"/>
</dbReference>
<dbReference type="Pfam" id="PF00579">
    <property type="entry name" value="tRNA-synt_1b"/>
    <property type="match status" value="1"/>
</dbReference>
<dbReference type="PRINTS" id="PR01040">
    <property type="entry name" value="TRNASYNTHTYR"/>
</dbReference>
<dbReference type="SMART" id="SM00363">
    <property type="entry name" value="S4"/>
    <property type="match status" value="1"/>
</dbReference>
<dbReference type="SUPFAM" id="SSF55174">
    <property type="entry name" value="Alpha-L RNA-binding motif"/>
    <property type="match status" value="1"/>
</dbReference>
<dbReference type="SUPFAM" id="SSF52374">
    <property type="entry name" value="Nucleotidylyl transferase"/>
    <property type="match status" value="1"/>
</dbReference>
<dbReference type="PROSITE" id="PS00178">
    <property type="entry name" value="AA_TRNA_LIGASE_I"/>
    <property type="match status" value="1"/>
</dbReference>
<dbReference type="PROSITE" id="PS50889">
    <property type="entry name" value="S4"/>
    <property type="match status" value="1"/>
</dbReference>
<keyword id="KW-0030">Aminoacyl-tRNA synthetase</keyword>
<keyword id="KW-0067">ATP-binding</keyword>
<keyword id="KW-0963">Cytoplasm</keyword>
<keyword id="KW-0436">Ligase</keyword>
<keyword id="KW-0547">Nucleotide-binding</keyword>
<keyword id="KW-0648">Protein biosynthesis</keyword>
<keyword id="KW-1185">Reference proteome</keyword>
<keyword id="KW-0694">RNA-binding</keyword>
<sequence>MGILQDLEFRGLINQQTDDEGFEQLLEKESVKLYCGFDPTADSLHIGHMYPVLMLRRFQLAGHQPIALVGGGTGMIGDPSGKKAERTLNTKDTVAYYTESIKNQLSNFLEFENVDNPATMANNYDWLGNLDVISFLRDIGKNFGLNYMLAKDTVASRLETGISFTEFSYMILQSYDFLNLYQHHKCRLQIGGSDQWGNITAGLELIRKSEEDAKAFGLTIPLVTKSDGTKFGKTEGGAIWLDPEKTTPYEFYQFWINTDDRDVVKYLKYFTFLSHEEILELEKQVAEAPEKRAAQKALGSEMTKLVHGEEALEQAIKISAALFSGSVAELTASEIEQGFKDVPSVERTAEDTVLIDLLVESKISPSKRQAREDVTNGAIYVNGERTQALDYVVTENDRIEGKFTIIRRGKKKYFLIRY</sequence>
<gene>
    <name evidence="1" type="primary">tyrS1</name>
    <name type="ordered locus">BC_4657</name>
</gene>
<name>SYY1_BACCR</name>
<evidence type="ECO:0000255" key="1">
    <source>
        <dbReference type="HAMAP-Rule" id="MF_02006"/>
    </source>
</evidence>
<organism>
    <name type="scientific">Bacillus cereus (strain ATCC 14579 / DSM 31 / CCUG 7414 / JCM 2152 / NBRC 15305 / NCIMB 9373 / NCTC 2599 / NRRL B-3711)</name>
    <dbReference type="NCBI Taxonomy" id="226900"/>
    <lineage>
        <taxon>Bacteria</taxon>
        <taxon>Bacillati</taxon>
        <taxon>Bacillota</taxon>
        <taxon>Bacilli</taxon>
        <taxon>Bacillales</taxon>
        <taxon>Bacillaceae</taxon>
        <taxon>Bacillus</taxon>
        <taxon>Bacillus cereus group</taxon>
    </lineage>
</organism>
<accession>Q817A2</accession>
<comment type="function">
    <text evidence="1">Catalyzes the attachment of tyrosine to tRNA(Tyr) in a two-step reaction: tyrosine is first activated by ATP to form Tyr-AMP and then transferred to the acceptor end of tRNA(Tyr).</text>
</comment>
<comment type="catalytic activity">
    <reaction evidence="1">
        <text>tRNA(Tyr) + L-tyrosine + ATP = L-tyrosyl-tRNA(Tyr) + AMP + diphosphate + H(+)</text>
        <dbReference type="Rhea" id="RHEA:10220"/>
        <dbReference type="Rhea" id="RHEA-COMP:9706"/>
        <dbReference type="Rhea" id="RHEA-COMP:9707"/>
        <dbReference type="ChEBI" id="CHEBI:15378"/>
        <dbReference type="ChEBI" id="CHEBI:30616"/>
        <dbReference type="ChEBI" id="CHEBI:33019"/>
        <dbReference type="ChEBI" id="CHEBI:58315"/>
        <dbReference type="ChEBI" id="CHEBI:78442"/>
        <dbReference type="ChEBI" id="CHEBI:78536"/>
        <dbReference type="ChEBI" id="CHEBI:456215"/>
        <dbReference type="EC" id="6.1.1.1"/>
    </reaction>
</comment>
<comment type="subunit">
    <text evidence="1">Homodimer.</text>
</comment>
<comment type="subcellular location">
    <subcellularLocation>
        <location evidence="1">Cytoplasm</location>
    </subcellularLocation>
</comment>
<comment type="similarity">
    <text evidence="1">Belongs to the class-I aminoacyl-tRNA synthetase family. TyrS type 1 subfamily.</text>
</comment>